<keyword id="KW-0032">Aminotransferase</keyword>
<keyword id="KW-0315">Glutamine amidotransferase</keyword>
<keyword id="KW-0597">Phosphoprotein</keyword>
<keyword id="KW-1267">Proteomics identification</keyword>
<keyword id="KW-1185">Reference proteome</keyword>
<keyword id="KW-0677">Repeat</keyword>
<keyword id="KW-0808">Transferase</keyword>
<accession>O94808</accession>
<accession>Q53XM2</accession>
<accession>Q9BWS4</accession>
<sequence>MCGIFAYMNYRVPRTRKEIFETLIKGLQRLEYRGYDSAGVAIDGNNHEVKERHIQLVKKRGKVKALDEELYKQDSMDLKVEFETHFGIAHTRWATHGVPSAVNSHPQRSDKGNEFVVIHNGIITNYKDLRKFLESKGYEFESETDTETIAKLIKYVFDNRETEDITFSTLVERVIQQLEGAFALVFKSVHYPGEAVATRRGSPLLIGVRSKYKLSTEQIPILYRTCTLENVKNICKTRMKRLDSSACLHAVGDKAVEFFFASDASAIIEHTNRVIFLEDDDIAAVADGKLSIHRVKRSASDDPSRAIQTLQMELQQIMKGNFSAFMQKEIFEQPESVFNTMRGRVNFETNTVLLGGLKDHLKEIRRCRRLIVIGCGTSYHAAVATRQVLEELTELPVMVELASDFLDRNTPVFRDDVCFFISQSGETADTLLALRYCKDRGALTVGVTNTVGSSISRETDCGVHINAGPEIGVASTKAYTSQFISLVMFGLMMSEDRISLQNRRQEIIRGLRSLPELIKEVLSLEEKIHDLALELYTQRSLLVMGRGYNYATCLEGALKIKEITYMHSEGILAGELKHGPLALIDKQMPVIMVIMKDPCFAKCQNALQQVTARQGRPIILCSKDDTESSKFAYKTIELPHTVDCLQGILSVIPLQLLSFHLAVLRGYDVDFPRNLAKSVTVE</sequence>
<name>GFPT2_HUMAN</name>
<dbReference type="EC" id="2.6.1.16" evidence="3"/>
<dbReference type="EMBL" id="AB016789">
    <property type="protein sequence ID" value="BAA74731.1"/>
    <property type="molecule type" value="mRNA"/>
</dbReference>
<dbReference type="EMBL" id="BT009818">
    <property type="protein sequence ID" value="AAP88820.1"/>
    <property type="molecule type" value="mRNA"/>
</dbReference>
<dbReference type="EMBL" id="BC000012">
    <property type="protein sequence ID" value="AAH00012.1"/>
    <property type="molecule type" value="mRNA"/>
</dbReference>
<dbReference type="CCDS" id="CCDS43411.1"/>
<dbReference type="RefSeq" id="NP_005101.1">
    <property type="nucleotide sequence ID" value="NM_005110.4"/>
</dbReference>
<dbReference type="SMR" id="O94808"/>
<dbReference type="BioGRID" id="115270">
    <property type="interactions" value="91"/>
</dbReference>
<dbReference type="FunCoup" id="O94808">
    <property type="interactions" value="604"/>
</dbReference>
<dbReference type="IntAct" id="O94808">
    <property type="interactions" value="36"/>
</dbReference>
<dbReference type="STRING" id="9606.ENSP00000253778"/>
<dbReference type="DrugBank" id="DB00130">
    <property type="generic name" value="L-Glutamine"/>
</dbReference>
<dbReference type="MEROPS" id="C44.972"/>
<dbReference type="iPTMnet" id="O94808"/>
<dbReference type="PhosphoSitePlus" id="O94808"/>
<dbReference type="SwissPalm" id="O94808"/>
<dbReference type="BioMuta" id="GFPT2"/>
<dbReference type="jPOST" id="O94808"/>
<dbReference type="MassIVE" id="O94808"/>
<dbReference type="PaxDb" id="9606-ENSP00000253778"/>
<dbReference type="PeptideAtlas" id="O94808"/>
<dbReference type="ProteomicsDB" id="50448"/>
<dbReference type="Pumba" id="O94808"/>
<dbReference type="Antibodypedia" id="29588">
    <property type="antibodies" value="196 antibodies from 27 providers"/>
</dbReference>
<dbReference type="DNASU" id="9945"/>
<dbReference type="Ensembl" id="ENST00000253778.13">
    <property type="protein sequence ID" value="ENSP00000253778.8"/>
    <property type="gene ID" value="ENSG00000131459.13"/>
</dbReference>
<dbReference type="GeneID" id="9945"/>
<dbReference type="KEGG" id="hsa:9945"/>
<dbReference type="MANE-Select" id="ENST00000253778.13">
    <property type="protein sequence ID" value="ENSP00000253778.8"/>
    <property type="RefSeq nucleotide sequence ID" value="NM_005110.4"/>
    <property type="RefSeq protein sequence ID" value="NP_005101.1"/>
</dbReference>
<dbReference type="UCSC" id="uc003mlw.2">
    <property type="organism name" value="human"/>
</dbReference>
<dbReference type="AGR" id="HGNC:4242"/>
<dbReference type="CTD" id="9945"/>
<dbReference type="DisGeNET" id="9945"/>
<dbReference type="GeneCards" id="GFPT2"/>
<dbReference type="HGNC" id="HGNC:4242">
    <property type="gene designation" value="GFPT2"/>
</dbReference>
<dbReference type="HPA" id="ENSG00000131459">
    <property type="expression patterns" value="Tissue enhanced (adipose)"/>
</dbReference>
<dbReference type="MIM" id="603865">
    <property type="type" value="gene"/>
</dbReference>
<dbReference type="neXtProt" id="NX_O94808"/>
<dbReference type="OpenTargets" id="ENSG00000131459"/>
<dbReference type="PharmGKB" id="PA28652"/>
<dbReference type="VEuPathDB" id="HostDB:ENSG00000131459"/>
<dbReference type="eggNOG" id="KOG1268">
    <property type="taxonomic scope" value="Eukaryota"/>
</dbReference>
<dbReference type="GeneTree" id="ENSGT00940000156413"/>
<dbReference type="HOGENOM" id="CLU_012520_5_2_1"/>
<dbReference type="InParanoid" id="O94808"/>
<dbReference type="OMA" id="GCTAKYW"/>
<dbReference type="OrthoDB" id="15235at2759"/>
<dbReference type="PAN-GO" id="O94808">
    <property type="GO annotations" value="4 GO annotations based on evolutionary models"/>
</dbReference>
<dbReference type="PhylomeDB" id="O94808"/>
<dbReference type="TreeFam" id="TF300864"/>
<dbReference type="PathwayCommons" id="O94808"/>
<dbReference type="Reactome" id="R-HSA-446210">
    <property type="pathway name" value="Synthesis of UDP-N-acetyl-glucosamine"/>
</dbReference>
<dbReference type="SignaLink" id="O94808"/>
<dbReference type="UniPathway" id="UPA00113">
    <property type="reaction ID" value="UER00528"/>
</dbReference>
<dbReference type="BioGRID-ORCS" id="9945">
    <property type="hits" value="7 hits in 1148 CRISPR screens"/>
</dbReference>
<dbReference type="ChiTaRS" id="GFPT2">
    <property type="organism name" value="human"/>
</dbReference>
<dbReference type="GenomeRNAi" id="9945"/>
<dbReference type="Pharos" id="O94808">
    <property type="development level" value="Tbio"/>
</dbReference>
<dbReference type="PRO" id="PR:O94808"/>
<dbReference type="Proteomes" id="UP000005640">
    <property type="component" value="Chromosome 5"/>
</dbReference>
<dbReference type="RNAct" id="O94808">
    <property type="molecule type" value="protein"/>
</dbReference>
<dbReference type="Bgee" id="ENSG00000131459">
    <property type="expression patterns" value="Expressed in pericardium and 154 other cell types or tissues"/>
</dbReference>
<dbReference type="ExpressionAtlas" id="O94808">
    <property type="expression patterns" value="baseline and differential"/>
</dbReference>
<dbReference type="GO" id="GO:0005829">
    <property type="term" value="C:cytosol"/>
    <property type="evidence" value="ECO:0000304"/>
    <property type="project" value="Reactome"/>
</dbReference>
<dbReference type="GO" id="GO:0097367">
    <property type="term" value="F:carbohydrate derivative binding"/>
    <property type="evidence" value="ECO:0007669"/>
    <property type="project" value="InterPro"/>
</dbReference>
<dbReference type="GO" id="GO:0004360">
    <property type="term" value="F:glutamine-fructose-6-phosphate transaminase (isomerizing) activity"/>
    <property type="evidence" value="ECO:0000314"/>
    <property type="project" value="FlyBase"/>
</dbReference>
<dbReference type="GO" id="GO:1990830">
    <property type="term" value="P:cellular response to leukemia inhibitory factor"/>
    <property type="evidence" value="ECO:0007669"/>
    <property type="project" value="Ensembl"/>
</dbReference>
<dbReference type="GO" id="GO:0006112">
    <property type="term" value="P:energy reserve metabolic process"/>
    <property type="evidence" value="ECO:0000304"/>
    <property type="project" value="ProtInc"/>
</dbReference>
<dbReference type="GO" id="GO:0006002">
    <property type="term" value="P:fructose 6-phosphate metabolic process"/>
    <property type="evidence" value="ECO:0000314"/>
    <property type="project" value="FlyBase"/>
</dbReference>
<dbReference type="GO" id="GO:0006487">
    <property type="term" value="P:protein N-linked glycosylation"/>
    <property type="evidence" value="ECO:0000318"/>
    <property type="project" value="GO_Central"/>
</dbReference>
<dbReference type="GO" id="GO:0006048">
    <property type="term" value="P:UDP-N-acetylglucosamine biosynthetic process"/>
    <property type="evidence" value="ECO:0000314"/>
    <property type="project" value="FlyBase"/>
</dbReference>
<dbReference type="GO" id="GO:0006047">
    <property type="term" value="P:UDP-N-acetylglucosamine metabolic process"/>
    <property type="evidence" value="ECO:0000318"/>
    <property type="project" value="GO_Central"/>
</dbReference>
<dbReference type="CDD" id="cd00714">
    <property type="entry name" value="GFAT"/>
    <property type="match status" value="1"/>
</dbReference>
<dbReference type="CDD" id="cd05008">
    <property type="entry name" value="SIS_GlmS_GlmD_1"/>
    <property type="match status" value="1"/>
</dbReference>
<dbReference type="CDD" id="cd05009">
    <property type="entry name" value="SIS_GlmS_GlmD_2"/>
    <property type="match status" value="1"/>
</dbReference>
<dbReference type="FunFam" id="3.40.50.10490:FF:000001">
    <property type="entry name" value="Glutamine--fructose-6-phosphate aminotransferase [isomerizing]"/>
    <property type="match status" value="1"/>
</dbReference>
<dbReference type="FunFam" id="3.40.50.10490:FF:000126">
    <property type="entry name" value="Glutamine--fructose-6-phosphate aminotransferase [isomerizing] 1"/>
    <property type="match status" value="1"/>
</dbReference>
<dbReference type="Gene3D" id="3.40.50.10490">
    <property type="entry name" value="Glucose-6-phosphate isomerase like protein, domain 1"/>
    <property type="match status" value="2"/>
</dbReference>
<dbReference type="Gene3D" id="3.60.20.10">
    <property type="entry name" value="Glutamine Phosphoribosylpyrophosphate, subunit 1, domain 1"/>
    <property type="match status" value="1"/>
</dbReference>
<dbReference type="InterPro" id="IPR017932">
    <property type="entry name" value="GATase_2_dom"/>
</dbReference>
<dbReference type="InterPro" id="IPR005855">
    <property type="entry name" value="GFAT"/>
</dbReference>
<dbReference type="InterPro" id="IPR047084">
    <property type="entry name" value="GFAT_N"/>
</dbReference>
<dbReference type="InterPro" id="IPR035466">
    <property type="entry name" value="GlmS/AgaS_SIS"/>
</dbReference>
<dbReference type="InterPro" id="IPR035490">
    <property type="entry name" value="GlmS/FrlB_SIS"/>
</dbReference>
<dbReference type="InterPro" id="IPR029055">
    <property type="entry name" value="Ntn_hydrolases_N"/>
</dbReference>
<dbReference type="InterPro" id="IPR001347">
    <property type="entry name" value="SIS_dom"/>
</dbReference>
<dbReference type="InterPro" id="IPR046348">
    <property type="entry name" value="SIS_dom_sf"/>
</dbReference>
<dbReference type="NCBIfam" id="TIGR01135">
    <property type="entry name" value="glmS"/>
    <property type="match status" value="1"/>
</dbReference>
<dbReference type="NCBIfam" id="NF001484">
    <property type="entry name" value="PRK00331.1"/>
    <property type="match status" value="1"/>
</dbReference>
<dbReference type="PANTHER" id="PTHR10937">
    <property type="entry name" value="GLUCOSAMINE--FRUCTOSE-6-PHOSPHATE AMINOTRANSFERASE, ISOMERIZING"/>
    <property type="match status" value="1"/>
</dbReference>
<dbReference type="PANTHER" id="PTHR10937:SF10">
    <property type="entry name" value="GLUTAMINE--FRUCTOSE-6-PHOSPHATE AMINOTRANSFERASE [ISOMERIZING] 2"/>
    <property type="match status" value="1"/>
</dbReference>
<dbReference type="Pfam" id="PF13522">
    <property type="entry name" value="GATase_6"/>
    <property type="match status" value="1"/>
</dbReference>
<dbReference type="Pfam" id="PF01380">
    <property type="entry name" value="SIS"/>
    <property type="match status" value="2"/>
</dbReference>
<dbReference type="SUPFAM" id="SSF56235">
    <property type="entry name" value="N-terminal nucleophile aminohydrolases (Ntn hydrolases)"/>
    <property type="match status" value="1"/>
</dbReference>
<dbReference type="SUPFAM" id="SSF53697">
    <property type="entry name" value="SIS domain"/>
    <property type="match status" value="1"/>
</dbReference>
<dbReference type="PROSITE" id="PS51278">
    <property type="entry name" value="GATASE_TYPE_2"/>
    <property type="match status" value="1"/>
</dbReference>
<dbReference type="PROSITE" id="PS51464">
    <property type="entry name" value="SIS"/>
    <property type="match status" value="2"/>
</dbReference>
<organism>
    <name type="scientific">Homo sapiens</name>
    <name type="common">Human</name>
    <dbReference type="NCBI Taxonomy" id="9606"/>
    <lineage>
        <taxon>Eukaryota</taxon>
        <taxon>Metazoa</taxon>
        <taxon>Chordata</taxon>
        <taxon>Craniata</taxon>
        <taxon>Vertebrata</taxon>
        <taxon>Euteleostomi</taxon>
        <taxon>Mammalia</taxon>
        <taxon>Eutheria</taxon>
        <taxon>Euarchontoglires</taxon>
        <taxon>Primates</taxon>
        <taxon>Haplorrhini</taxon>
        <taxon>Catarrhini</taxon>
        <taxon>Hominidae</taxon>
        <taxon>Homo</taxon>
    </lineage>
</organism>
<feature type="initiator methionine" description="Removed" evidence="1">
    <location>
        <position position="1"/>
    </location>
</feature>
<feature type="chain" id="PRO_0000135283" description="Glutamine--fructose-6-phosphate aminotransferase [isomerizing] 2">
    <location>
        <begin position="2"/>
        <end position="682"/>
    </location>
</feature>
<feature type="domain" description="Glutamine amidotransferase type-2" evidence="5">
    <location>
        <begin position="2"/>
        <end position="288"/>
    </location>
</feature>
<feature type="domain" description="SIS 1" evidence="6">
    <location>
        <begin position="360"/>
        <end position="499"/>
    </location>
</feature>
<feature type="domain" description="SIS 2" evidence="6">
    <location>
        <begin position="531"/>
        <end position="672"/>
    </location>
</feature>
<feature type="active site" description="For GATase activity" evidence="2">
    <location>
        <position position="2"/>
    </location>
</feature>
<feature type="binding site" evidence="4">
    <location>
        <begin position="377"/>
        <end position="378"/>
    </location>
    <ligand>
        <name>substrate</name>
    </ligand>
</feature>
<feature type="binding site" evidence="4">
    <location>
        <begin position="422"/>
        <end position="424"/>
    </location>
    <ligand>
        <name>substrate</name>
    </ligand>
</feature>
<feature type="binding site" evidence="4">
    <location>
        <position position="427"/>
    </location>
    <ligand>
        <name>substrate</name>
    </ligand>
</feature>
<feature type="binding site" evidence="4">
    <location>
        <position position="578"/>
    </location>
    <ligand>
        <name>substrate</name>
    </ligand>
</feature>
<feature type="modified residue" description="Phosphoserine" evidence="8">
    <location>
        <position position="244"/>
    </location>
</feature>
<feature type="sequence variant" id="VAR_013311" description="In dbSNP:rs2303007." evidence="7">
    <original>I</original>
    <variation>V</variation>
    <location>
        <position position="471"/>
    </location>
</feature>
<comment type="function">
    <text>Controls the flux of glucose into the hexosamine pathway. Most likely involved in regulating the availability of precursors for N- and O-linked glycosylation of proteins.</text>
</comment>
<comment type="catalytic activity">
    <reaction evidence="3">
        <text>D-fructose 6-phosphate + L-glutamine = D-glucosamine 6-phosphate + L-glutamate</text>
        <dbReference type="Rhea" id="RHEA:13237"/>
        <dbReference type="ChEBI" id="CHEBI:29985"/>
        <dbReference type="ChEBI" id="CHEBI:58359"/>
        <dbReference type="ChEBI" id="CHEBI:58725"/>
        <dbReference type="ChEBI" id="CHEBI:61527"/>
        <dbReference type="EC" id="2.6.1.16"/>
    </reaction>
</comment>
<comment type="pathway">
    <text evidence="3">Nucleotide-sugar biosynthesis; UDP-N-acetyl-alpha-D-glucosamine biosynthesis; alpha-D-glucosamine 6-phosphate from D-fructose 6-phosphate: step 1/1.</text>
</comment>
<comment type="interaction">
    <interactant intactId="EBI-6916534">
        <id>O94808</id>
    </interactant>
    <interactant intactId="EBI-1055540">
        <id>Q06210</id>
        <label>GFPT1</label>
    </interactant>
    <organismsDiffer>false</organismsDiffer>
    <experiments>2</experiments>
</comment>
<comment type="interaction">
    <interactant intactId="EBI-6916534">
        <id>O94808</id>
    </interactant>
    <interactant intactId="EBI-752420">
        <id>Q9NUX5</id>
        <label>POT1</label>
    </interactant>
    <organismsDiffer>false</organismsDiffer>
    <experiments>2</experiments>
</comment>
<comment type="tissue specificity">
    <text>Highest levels of expression in heart, placenta, and spinal cord.</text>
</comment>
<proteinExistence type="evidence at protein level"/>
<evidence type="ECO:0000250" key="1"/>
<evidence type="ECO:0000250" key="2">
    <source>
        <dbReference type="UniProtKB" id="P14742"/>
    </source>
</evidence>
<evidence type="ECO:0000250" key="3">
    <source>
        <dbReference type="UniProtKB" id="P82808"/>
    </source>
</evidence>
<evidence type="ECO:0000250" key="4">
    <source>
        <dbReference type="UniProtKB" id="Q06210"/>
    </source>
</evidence>
<evidence type="ECO:0000255" key="5">
    <source>
        <dbReference type="PROSITE-ProRule" id="PRU00609"/>
    </source>
</evidence>
<evidence type="ECO:0000255" key="6">
    <source>
        <dbReference type="PROSITE-ProRule" id="PRU00797"/>
    </source>
</evidence>
<evidence type="ECO:0000269" key="7">
    <source ref="2"/>
</evidence>
<evidence type="ECO:0007744" key="8">
    <source>
    </source>
</evidence>
<protein>
    <recommendedName>
        <fullName>Glutamine--fructose-6-phosphate aminotransferase [isomerizing] 2</fullName>
        <ecNumber evidence="3">2.6.1.16</ecNumber>
    </recommendedName>
    <alternativeName>
        <fullName>D-fructose-6-phosphate amidotransferase 2</fullName>
    </alternativeName>
    <alternativeName>
        <fullName>Glutamine:fructose-6-phosphate amidotransferase 2</fullName>
        <shortName>GFAT 2</shortName>
        <shortName>GFAT2</shortName>
    </alternativeName>
    <alternativeName>
        <fullName>Hexosephosphate aminotransferase 2</fullName>
    </alternativeName>
</protein>
<gene>
    <name type="primary">GFPT2</name>
</gene>
<reference key="1">
    <citation type="journal article" date="1999" name="Genomics">
        <title>cDNA cloning and mapping of a novel subtype of glutamine:fructose-6-phosphate amidotransferase (GFAT2) in human and mouse.</title>
        <authorList>
            <person name="Oki T."/>
            <person name="Yamazaki K."/>
            <person name="Kuromitsu J."/>
            <person name="Okada M."/>
            <person name="Tanaka I."/>
        </authorList>
    </citation>
    <scope>NUCLEOTIDE SEQUENCE [MRNA]</scope>
    <source>
        <tissue>Thymus</tissue>
    </source>
</reference>
<reference key="2">
    <citation type="submission" date="2003-08" db="EMBL/GenBank/DDBJ databases">
        <title>Cloning of human full-length CDSs in BD Creator(TM) system donor vector.</title>
        <authorList>
            <person name="Kalnine N."/>
            <person name="Chen X."/>
            <person name="Rolfs A."/>
            <person name="Halleck A."/>
            <person name="Hines L."/>
            <person name="Eisenstein S."/>
            <person name="Koundinya M."/>
            <person name="Raphael J."/>
            <person name="Moreira D."/>
            <person name="Kelley T."/>
            <person name="LaBaer J."/>
            <person name="Lin Y."/>
            <person name="Phelan M."/>
            <person name="Farmer A."/>
        </authorList>
    </citation>
    <scope>NUCLEOTIDE SEQUENCE [LARGE SCALE MRNA]</scope>
    <scope>VARIANT VAL-471</scope>
</reference>
<reference key="3">
    <citation type="journal article" date="2004" name="Genome Res.">
        <title>The status, quality, and expansion of the NIH full-length cDNA project: the Mammalian Gene Collection (MGC).</title>
        <authorList>
            <consortium name="The MGC Project Team"/>
        </authorList>
    </citation>
    <scope>NUCLEOTIDE SEQUENCE [LARGE SCALE MRNA]</scope>
    <source>
        <tissue>Kidney</tissue>
    </source>
</reference>
<reference key="4">
    <citation type="journal article" date="2008" name="Proc. Natl. Acad. Sci. U.S.A.">
        <title>A quantitative atlas of mitotic phosphorylation.</title>
        <authorList>
            <person name="Dephoure N."/>
            <person name="Zhou C."/>
            <person name="Villen J."/>
            <person name="Beausoleil S.A."/>
            <person name="Bakalarski C.E."/>
            <person name="Elledge S.J."/>
            <person name="Gygi S.P."/>
        </authorList>
    </citation>
    <scope>IDENTIFICATION BY MASS SPECTROMETRY [LARGE SCALE ANALYSIS]</scope>
    <source>
        <tissue>Cervix carcinoma</tissue>
    </source>
</reference>
<reference key="5">
    <citation type="journal article" date="2011" name="Sci. Signal.">
        <title>System-wide temporal characterization of the proteome and phosphoproteome of human embryonic stem cell differentiation.</title>
        <authorList>
            <person name="Rigbolt K.T."/>
            <person name="Prokhorova T.A."/>
            <person name="Akimov V."/>
            <person name="Henningsen J."/>
            <person name="Johansen P.T."/>
            <person name="Kratchmarova I."/>
            <person name="Kassem M."/>
            <person name="Mann M."/>
            <person name="Olsen J.V."/>
            <person name="Blagoev B."/>
        </authorList>
    </citation>
    <scope>IDENTIFICATION BY MASS SPECTROMETRY [LARGE SCALE ANALYSIS]</scope>
</reference>
<reference key="6">
    <citation type="journal article" date="2013" name="J. Proteome Res.">
        <title>Toward a comprehensive characterization of a human cancer cell phosphoproteome.</title>
        <authorList>
            <person name="Zhou H."/>
            <person name="Di Palma S."/>
            <person name="Preisinger C."/>
            <person name="Peng M."/>
            <person name="Polat A.N."/>
            <person name="Heck A.J."/>
            <person name="Mohammed S."/>
        </authorList>
    </citation>
    <scope>PHOSPHORYLATION [LARGE SCALE ANALYSIS] AT SER-244</scope>
    <scope>IDENTIFICATION BY MASS SPECTROMETRY [LARGE SCALE ANALYSIS]</scope>
    <source>
        <tissue>Cervix carcinoma</tissue>
    </source>
</reference>